<proteinExistence type="inferred from homology"/>
<comment type="function">
    <text evidence="1">One of the primary rRNA binding proteins, it binds directly to 16S rRNA where it nucleates assembly of the head domain of the 30S subunit.</text>
</comment>
<comment type="subunit">
    <text>Part of the 30S ribosomal subunit.</text>
</comment>
<comment type="subcellular location">
    <subcellularLocation>
        <location>Plastid</location>
        <location>Chloroplast</location>
    </subcellularLocation>
</comment>
<comment type="similarity">
    <text evidence="3">Belongs to the universal ribosomal protein uS7 family.</text>
</comment>
<evidence type="ECO:0000250" key="1"/>
<evidence type="ECO:0000255" key="2">
    <source>
        <dbReference type="HAMAP-Rule" id="MF_00480"/>
    </source>
</evidence>
<evidence type="ECO:0000305" key="3"/>
<protein>
    <recommendedName>
        <fullName evidence="2">Small ribosomal subunit protein uS7cz/uS7cy</fullName>
    </recommendedName>
    <alternativeName>
        <fullName>30S ribosomal protein S7, chloroplastic</fullName>
    </alternativeName>
</protein>
<dbReference type="EMBL" id="DQ864733">
    <property type="protein sequence ID" value="ABI49065.1"/>
    <property type="molecule type" value="Genomic_DNA"/>
</dbReference>
<dbReference type="EMBL" id="DQ864733">
    <property type="protein sequence ID" value="ABI49081.1"/>
    <property type="molecule type" value="Genomic_DNA"/>
</dbReference>
<dbReference type="SMR" id="Q09MB7"/>
<dbReference type="KEGG" id="cit:4271161"/>
<dbReference type="KEGG" id="cit:4271171"/>
<dbReference type="OrthoDB" id="59446at71240"/>
<dbReference type="GO" id="GO:0009507">
    <property type="term" value="C:chloroplast"/>
    <property type="evidence" value="ECO:0007669"/>
    <property type="project" value="UniProtKB-SubCell"/>
</dbReference>
<dbReference type="GO" id="GO:0015935">
    <property type="term" value="C:small ribosomal subunit"/>
    <property type="evidence" value="ECO:0007669"/>
    <property type="project" value="InterPro"/>
</dbReference>
<dbReference type="GO" id="GO:0019843">
    <property type="term" value="F:rRNA binding"/>
    <property type="evidence" value="ECO:0007669"/>
    <property type="project" value="UniProtKB-UniRule"/>
</dbReference>
<dbReference type="GO" id="GO:0003735">
    <property type="term" value="F:structural constituent of ribosome"/>
    <property type="evidence" value="ECO:0007669"/>
    <property type="project" value="InterPro"/>
</dbReference>
<dbReference type="GO" id="GO:0006412">
    <property type="term" value="P:translation"/>
    <property type="evidence" value="ECO:0007669"/>
    <property type="project" value="UniProtKB-UniRule"/>
</dbReference>
<dbReference type="CDD" id="cd14871">
    <property type="entry name" value="uS7_Chloroplast"/>
    <property type="match status" value="1"/>
</dbReference>
<dbReference type="FunFam" id="1.10.455.10:FF:000001">
    <property type="entry name" value="30S ribosomal protein S7"/>
    <property type="match status" value="1"/>
</dbReference>
<dbReference type="Gene3D" id="1.10.455.10">
    <property type="entry name" value="Ribosomal protein S7 domain"/>
    <property type="match status" value="1"/>
</dbReference>
<dbReference type="HAMAP" id="MF_00480_B">
    <property type="entry name" value="Ribosomal_uS7_B"/>
    <property type="match status" value="1"/>
</dbReference>
<dbReference type="InterPro" id="IPR000235">
    <property type="entry name" value="Ribosomal_uS7"/>
</dbReference>
<dbReference type="InterPro" id="IPR005717">
    <property type="entry name" value="Ribosomal_uS7_bac/org-type"/>
</dbReference>
<dbReference type="InterPro" id="IPR020606">
    <property type="entry name" value="Ribosomal_uS7_CS"/>
</dbReference>
<dbReference type="InterPro" id="IPR023798">
    <property type="entry name" value="Ribosomal_uS7_dom"/>
</dbReference>
<dbReference type="InterPro" id="IPR036823">
    <property type="entry name" value="Ribosomal_uS7_dom_sf"/>
</dbReference>
<dbReference type="NCBIfam" id="TIGR01029">
    <property type="entry name" value="rpsG_bact"/>
    <property type="match status" value="1"/>
</dbReference>
<dbReference type="PANTHER" id="PTHR11205">
    <property type="entry name" value="RIBOSOMAL PROTEIN S7"/>
    <property type="match status" value="1"/>
</dbReference>
<dbReference type="Pfam" id="PF00177">
    <property type="entry name" value="Ribosomal_S7"/>
    <property type="match status" value="1"/>
</dbReference>
<dbReference type="PIRSF" id="PIRSF002122">
    <property type="entry name" value="RPS7p_RPS7a_RPS5e_RPS7o"/>
    <property type="match status" value="1"/>
</dbReference>
<dbReference type="SUPFAM" id="SSF47973">
    <property type="entry name" value="Ribosomal protein S7"/>
    <property type="match status" value="1"/>
</dbReference>
<dbReference type="PROSITE" id="PS00052">
    <property type="entry name" value="RIBOSOMAL_S7"/>
    <property type="match status" value="1"/>
</dbReference>
<sequence>MSRRGTTEEKTAKSDPIYRNRLVNMLVNRILKHGKKSLAYQIIYRALKKIQQKTEKNPLSVLRQAIRGVTPDIAVKARRVGGSTHQVPIEIGSAQGKALAVRWLLGASRKRPGRNMAFKLSSELVDAAKGSGDAIRKKEETHRMAEANRAFAHFR</sequence>
<reference key="1">
    <citation type="journal article" date="2006" name="BMC Plant Biol.">
        <title>The complete chloroplast genome sequence of Citrus sinensis (L.) Osbeck var 'Ridge Pineapple': organization and phylogenetic relationships to other angiosperms.</title>
        <authorList>
            <person name="Bausher M.G."/>
            <person name="Singh N.D."/>
            <person name="Lee S.-B."/>
            <person name="Jansen R.K."/>
            <person name="Daniell H."/>
        </authorList>
    </citation>
    <scope>NUCLEOTIDE SEQUENCE [LARGE SCALE GENOMIC DNA]</scope>
    <source>
        <strain>cv. Osbeck var. Ridge Pineapple</strain>
    </source>
</reference>
<feature type="chain" id="PRO_0000277034" description="Small ribosomal subunit protein uS7cz/uS7cy">
    <location>
        <begin position="1"/>
        <end position="155"/>
    </location>
</feature>
<accession>Q09MB7</accession>
<name>RR7_CITSI</name>
<geneLocation type="chloroplast"/>
<organism>
    <name type="scientific">Citrus sinensis</name>
    <name type="common">Sweet orange</name>
    <name type="synonym">Citrus aurantium var. sinensis</name>
    <dbReference type="NCBI Taxonomy" id="2711"/>
    <lineage>
        <taxon>Eukaryota</taxon>
        <taxon>Viridiplantae</taxon>
        <taxon>Streptophyta</taxon>
        <taxon>Embryophyta</taxon>
        <taxon>Tracheophyta</taxon>
        <taxon>Spermatophyta</taxon>
        <taxon>Magnoliopsida</taxon>
        <taxon>eudicotyledons</taxon>
        <taxon>Gunneridae</taxon>
        <taxon>Pentapetalae</taxon>
        <taxon>rosids</taxon>
        <taxon>malvids</taxon>
        <taxon>Sapindales</taxon>
        <taxon>Rutaceae</taxon>
        <taxon>Aurantioideae</taxon>
        <taxon>Citrus</taxon>
    </lineage>
</organism>
<keyword id="KW-0150">Chloroplast</keyword>
<keyword id="KW-0934">Plastid</keyword>
<keyword id="KW-0687">Ribonucleoprotein</keyword>
<keyword id="KW-0689">Ribosomal protein</keyword>
<keyword id="KW-0694">RNA-binding</keyword>
<keyword id="KW-0699">rRNA-binding</keyword>
<gene>
    <name type="primary">rps7-A</name>
</gene>
<gene>
    <name type="primary">rps7-B</name>
</gene>